<name>AROB_NEIMA</name>
<reference key="1">
    <citation type="journal article" date="2000" name="Nature">
        <title>Complete DNA sequence of a serogroup A strain of Neisseria meningitidis Z2491.</title>
        <authorList>
            <person name="Parkhill J."/>
            <person name="Achtman M."/>
            <person name="James K.D."/>
            <person name="Bentley S.D."/>
            <person name="Churcher C.M."/>
            <person name="Klee S.R."/>
            <person name="Morelli G."/>
            <person name="Basham D."/>
            <person name="Brown D."/>
            <person name="Chillingworth T."/>
            <person name="Davies R.M."/>
            <person name="Davis P."/>
            <person name="Devlin K."/>
            <person name="Feltwell T."/>
            <person name="Hamlin N."/>
            <person name="Holroyd S."/>
            <person name="Jagels K."/>
            <person name="Leather S."/>
            <person name="Moule S."/>
            <person name="Mungall K.L."/>
            <person name="Quail M.A."/>
            <person name="Rajandream M.A."/>
            <person name="Rutherford K.M."/>
            <person name="Simmonds M."/>
            <person name="Skelton J."/>
            <person name="Whitehead S."/>
            <person name="Spratt B.G."/>
            <person name="Barrell B.G."/>
        </authorList>
    </citation>
    <scope>NUCLEOTIDE SEQUENCE [LARGE SCALE GENOMIC DNA]</scope>
    <source>
        <strain>DSM 15465 / Z2491</strain>
    </source>
</reference>
<protein>
    <recommendedName>
        <fullName evidence="1">3-dehydroquinate synthase</fullName>
        <shortName evidence="1">DHQS</shortName>
        <ecNumber evidence="1">4.2.3.4</ecNumber>
    </recommendedName>
</protein>
<evidence type="ECO:0000255" key="1">
    <source>
        <dbReference type="HAMAP-Rule" id="MF_00110"/>
    </source>
</evidence>
<comment type="function">
    <text evidence="1">Catalyzes the conversion of 3-deoxy-D-arabino-heptulosonate 7-phosphate (DAHP) to dehydroquinate (DHQ).</text>
</comment>
<comment type="catalytic activity">
    <reaction evidence="1">
        <text>7-phospho-2-dehydro-3-deoxy-D-arabino-heptonate = 3-dehydroquinate + phosphate</text>
        <dbReference type="Rhea" id="RHEA:21968"/>
        <dbReference type="ChEBI" id="CHEBI:32364"/>
        <dbReference type="ChEBI" id="CHEBI:43474"/>
        <dbReference type="ChEBI" id="CHEBI:58394"/>
        <dbReference type="EC" id="4.2.3.4"/>
    </reaction>
</comment>
<comment type="cofactor">
    <cofactor evidence="1">
        <name>NAD(+)</name>
        <dbReference type="ChEBI" id="CHEBI:57540"/>
    </cofactor>
</comment>
<comment type="cofactor">
    <cofactor evidence="1">
        <name>Co(2+)</name>
        <dbReference type="ChEBI" id="CHEBI:48828"/>
    </cofactor>
    <cofactor evidence="1">
        <name>Zn(2+)</name>
        <dbReference type="ChEBI" id="CHEBI:29105"/>
    </cofactor>
    <text evidence="1">Binds 1 divalent metal cation per subunit. Can use either Co(2+) or Zn(2+).</text>
</comment>
<comment type="pathway">
    <text evidence="1">Metabolic intermediate biosynthesis; chorismate biosynthesis; chorismate from D-erythrose 4-phosphate and phosphoenolpyruvate: step 2/7.</text>
</comment>
<comment type="subcellular location">
    <subcellularLocation>
        <location evidence="1">Cytoplasm</location>
    </subcellularLocation>
</comment>
<comment type="similarity">
    <text evidence="1">Belongs to the sugar phosphate cyclases superfamily. Dehydroquinate synthase family.</text>
</comment>
<feature type="chain" id="PRO_0000140759" description="3-dehydroquinate synthase">
    <location>
        <begin position="1"/>
        <end position="359"/>
    </location>
</feature>
<feature type="binding site" evidence="1">
    <location>
        <begin position="71"/>
        <end position="76"/>
    </location>
    <ligand>
        <name>NAD(+)</name>
        <dbReference type="ChEBI" id="CHEBI:57540"/>
    </ligand>
</feature>
<feature type="binding site" evidence="1">
    <location>
        <begin position="105"/>
        <end position="109"/>
    </location>
    <ligand>
        <name>NAD(+)</name>
        <dbReference type="ChEBI" id="CHEBI:57540"/>
    </ligand>
</feature>
<feature type="binding site" evidence="1">
    <location>
        <begin position="129"/>
        <end position="130"/>
    </location>
    <ligand>
        <name>NAD(+)</name>
        <dbReference type="ChEBI" id="CHEBI:57540"/>
    </ligand>
</feature>
<feature type="binding site" evidence="1">
    <location>
        <position position="142"/>
    </location>
    <ligand>
        <name>NAD(+)</name>
        <dbReference type="ChEBI" id="CHEBI:57540"/>
    </ligand>
</feature>
<feature type="binding site" evidence="1">
    <location>
        <position position="151"/>
    </location>
    <ligand>
        <name>NAD(+)</name>
        <dbReference type="ChEBI" id="CHEBI:57540"/>
    </ligand>
</feature>
<feature type="binding site" evidence="1">
    <location>
        <begin position="169"/>
        <end position="172"/>
    </location>
    <ligand>
        <name>NAD(+)</name>
        <dbReference type="ChEBI" id="CHEBI:57540"/>
    </ligand>
</feature>
<feature type="binding site" evidence="1">
    <location>
        <position position="184"/>
    </location>
    <ligand>
        <name>Zn(2+)</name>
        <dbReference type="ChEBI" id="CHEBI:29105"/>
    </ligand>
</feature>
<feature type="binding site" evidence="1">
    <location>
        <position position="247"/>
    </location>
    <ligand>
        <name>Zn(2+)</name>
        <dbReference type="ChEBI" id="CHEBI:29105"/>
    </ligand>
</feature>
<feature type="binding site" evidence="1">
    <location>
        <position position="264"/>
    </location>
    <ligand>
        <name>Zn(2+)</name>
        <dbReference type="ChEBI" id="CHEBI:29105"/>
    </ligand>
</feature>
<dbReference type="EC" id="4.2.3.4" evidence="1"/>
<dbReference type="EMBL" id="AL157959">
    <property type="protein sequence ID" value="CAM07911.1"/>
    <property type="molecule type" value="Genomic_DNA"/>
</dbReference>
<dbReference type="PIR" id="G81984">
    <property type="entry name" value="G81984"/>
</dbReference>
<dbReference type="RefSeq" id="WP_002236907.1">
    <property type="nucleotide sequence ID" value="NC_003116.1"/>
</dbReference>
<dbReference type="SMR" id="Q9JVW5"/>
<dbReference type="EnsemblBacteria" id="CAM07911">
    <property type="protein sequence ID" value="CAM07911"/>
    <property type="gene ID" value="NMA0647"/>
</dbReference>
<dbReference type="GeneID" id="93386715"/>
<dbReference type="KEGG" id="nma:NMA0647"/>
<dbReference type="HOGENOM" id="CLU_001201_0_2_4"/>
<dbReference type="UniPathway" id="UPA00053">
    <property type="reaction ID" value="UER00085"/>
</dbReference>
<dbReference type="Proteomes" id="UP000000626">
    <property type="component" value="Chromosome"/>
</dbReference>
<dbReference type="GO" id="GO:0005737">
    <property type="term" value="C:cytoplasm"/>
    <property type="evidence" value="ECO:0007669"/>
    <property type="project" value="UniProtKB-SubCell"/>
</dbReference>
<dbReference type="GO" id="GO:0003856">
    <property type="term" value="F:3-dehydroquinate synthase activity"/>
    <property type="evidence" value="ECO:0007669"/>
    <property type="project" value="UniProtKB-UniRule"/>
</dbReference>
<dbReference type="GO" id="GO:0046872">
    <property type="term" value="F:metal ion binding"/>
    <property type="evidence" value="ECO:0007669"/>
    <property type="project" value="UniProtKB-KW"/>
</dbReference>
<dbReference type="GO" id="GO:0000166">
    <property type="term" value="F:nucleotide binding"/>
    <property type="evidence" value="ECO:0007669"/>
    <property type="project" value="UniProtKB-KW"/>
</dbReference>
<dbReference type="GO" id="GO:0008652">
    <property type="term" value="P:amino acid biosynthetic process"/>
    <property type="evidence" value="ECO:0007669"/>
    <property type="project" value="UniProtKB-KW"/>
</dbReference>
<dbReference type="GO" id="GO:0009073">
    <property type="term" value="P:aromatic amino acid family biosynthetic process"/>
    <property type="evidence" value="ECO:0007669"/>
    <property type="project" value="UniProtKB-KW"/>
</dbReference>
<dbReference type="GO" id="GO:0009423">
    <property type="term" value="P:chorismate biosynthetic process"/>
    <property type="evidence" value="ECO:0007669"/>
    <property type="project" value="UniProtKB-UniRule"/>
</dbReference>
<dbReference type="CDD" id="cd08195">
    <property type="entry name" value="DHQS"/>
    <property type="match status" value="1"/>
</dbReference>
<dbReference type="FunFam" id="1.20.1090.10:FF:000002">
    <property type="entry name" value="3-dehydroquinate synthase"/>
    <property type="match status" value="1"/>
</dbReference>
<dbReference type="FunFam" id="3.40.50.1970:FF:000001">
    <property type="entry name" value="3-dehydroquinate synthase"/>
    <property type="match status" value="1"/>
</dbReference>
<dbReference type="Gene3D" id="3.40.50.1970">
    <property type="match status" value="1"/>
</dbReference>
<dbReference type="Gene3D" id="1.20.1090.10">
    <property type="entry name" value="Dehydroquinate synthase-like - alpha domain"/>
    <property type="match status" value="1"/>
</dbReference>
<dbReference type="HAMAP" id="MF_00110">
    <property type="entry name" value="DHQ_synthase"/>
    <property type="match status" value="1"/>
</dbReference>
<dbReference type="InterPro" id="IPR050071">
    <property type="entry name" value="Dehydroquinate_synthase"/>
</dbReference>
<dbReference type="InterPro" id="IPR016037">
    <property type="entry name" value="DHQ_synth_AroB"/>
</dbReference>
<dbReference type="InterPro" id="IPR030963">
    <property type="entry name" value="DHQ_synth_fam"/>
</dbReference>
<dbReference type="InterPro" id="IPR030960">
    <property type="entry name" value="DHQS/DOIS_N"/>
</dbReference>
<dbReference type="InterPro" id="IPR056179">
    <property type="entry name" value="DHQS_C"/>
</dbReference>
<dbReference type="NCBIfam" id="TIGR01357">
    <property type="entry name" value="aroB"/>
    <property type="match status" value="1"/>
</dbReference>
<dbReference type="PANTHER" id="PTHR43622">
    <property type="entry name" value="3-DEHYDROQUINATE SYNTHASE"/>
    <property type="match status" value="1"/>
</dbReference>
<dbReference type="PANTHER" id="PTHR43622:SF7">
    <property type="entry name" value="3-DEHYDROQUINATE SYNTHASE, CHLOROPLASTIC"/>
    <property type="match status" value="1"/>
</dbReference>
<dbReference type="Pfam" id="PF01761">
    <property type="entry name" value="DHQ_synthase"/>
    <property type="match status" value="1"/>
</dbReference>
<dbReference type="Pfam" id="PF24621">
    <property type="entry name" value="DHQS_C"/>
    <property type="match status" value="1"/>
</dbReference>
<dbReference type="PIRSF" id="PIRSF001455">
    <property type="entry name" value="DHQ_synth"/>
    <property type="match status" value="1"/>
</dbReference>
<dbReference type="SUPFAM" id="SSF56796">
    <property type="entry name" value="Dehydroquinate synthase-like"/>
    <property type="match status" value="1"/>
</dbReference>
<accession>Q9JVW5</accession>
<accession>A1IQ83</accession>
<keyword id="KW-0028">Amino-acid biosynthesis</keyword>
<keyword id="KW-0057">Aromatic amino acid biosynthesis</keyword>
<keyword id="KW-0170">Cobalt</keyword>
<keyword id="KW-0963">Cytoplasm</keyword>
<keyword id="KW-0456">Lyase</keyword>
<keyword id="KW-0479">Metal-binding</keyword>
<keyword id="KW-0520">NAD</keyword>
<keyword id="KW-0547">Nucleotide-binding</keyword>
<keyword id="KW-0862">Zinc</keyword>
<organism>
    <name type="scientific">Neisseria meningitidis serogroup A / serotype 4A (strain DSM 15465 / Z2491)</name>
    <dbReference type="NCBI Taxonomy" id="122587"/>
    <lineage>
        <taxon>Bacteria</taxon>
        <taxon>Pseudomonadati</taxon>
        <taxon>Pseudomonadota</taxon>
        <taxon>Betaproteobacteria</taxon>
        <taxon>Neisseriales</taxon>
        <taxon>Neisseriaceae</taxon>
        <taxon>Neisseria</taxon>
    </lineage>
</organism>
<sequence>MKTLTVHTPSHSYPIFIGNGLLPQAGSLLKPHLGKRAAIITNETVAPLYLGTLQTALDAAGVSHFSIILPDGEAHKNWQTLNLIFDGLMQNRAERKTTLIALGGGVIGDMTGFAAATYQRGAPFVQIPTTLLSQVDSSVGGKTAINHPLGKNMIGAFYQPQAVLADLDTLHTLPARELSAGMAEVIKYGTLGDISFFEWLEQHMPELMALERAPLIQAVYRCCQMKADIVAQDETEQGIRAWLNLGHTFGHAIETEMGYGTWLHGEAVAAGCVLAARLSEQLGKISAADTARLAALLEAAGLPSAPPVFAFEKWLEHMSHDKKVSGGIMRFIGLNRLGEANITEITDTDILRRTLQPYL</sequence>
<gene>
    <name evidence="1" type="primary">aroB</name>
    <name type="ordered locus">NMA0647</name>
</gene>
<proteinExistence type="inferred from homology"/>